<comment type="function">
    <text evidence="1">Converts N-acetylmannosamine-6-phosphate (ManNAc-6-P) to N-acetylglucosamine-6-phosphate (GlcNAc-6-P).</text>
</comment>
<comment type="catalytic activity">
    <reaction evidence="1">
        <text>an N-acyl-D-glucosamine 6-phosphate = an N-acyl-D-mannosamine 6-phosphate</text>
        <dbReference type="Rhea" id="RHEA:23932"/>
        <dbReference type="ChEBI" id="CHEBI:57599"/>
        <dbReference type="ChEBI" id="CHEBI:57666"/>
        <dbReference type="EC" id="5.1.3.9"/>
    </reaction>
</comment>
<comment type="pathway">
    <text evidence="1">Amino-sugar metabolism; N-acetylneuraminate degradation; D-fructose 6-phosphate from N-acetylneuraminate: step 3/5.</text>
</comment>
<comment type="similarity">
    <text evidence="1">Belongs to the NanE family.</text>
</comment>
<reference key="1">
    <citation type="journal article" date="2007" name="J. Bacteriol.">
        <title>The genome sequence of avian pathogenic Escherichia coli strain O1:K1:H7 shares strong similarities with human extraintestinal pathogenic E. coli genomes.</title>
        <authorList>
            <person name="Johnson T.J."/>
            <person name="Kariyawasam S."/>
            <person name="Wannemuehler Y."/>
            <person name="Mangiamele P."/>
            <person name="Johnson S.J."/>
            <person name="Doetkott C."/>
            <person name="Skyberg J.A."/>
            <person name="Lynne A.M."/>
            <person name="Johnson J.R."/>
            <person name="Nolan L.K."/>
        </authorList>
    </citation>
    <scope>NUCLEOTIDE SEQUENCE [LARGE SCALE GENOMIC DNA]</scope>
</reference>
<evidence type="ECO:0000255" key="1">
    <source>
        <dbReference type="HAMAP-Rule" id="MF_01235"/>
    </source>
</evidence>
<gene>
    <name evidence="1" type="primary">nanE</name>
    <name type="ordered locus">Ecok1_32130</name>
    <name type="ORF">APECO1_3220</name>
</gene>
<keyword id="KW-0119">Carbohydrate metabolism</keyword>
<keyword id="KW-0413">Isomerase</keyword>
<keyword id="KW-1185">Reference proteome</keyword>
<name>NANE_ECOK1</name>
<feature type="chain" id="PRO_0000301471" description="Putative N-acetylmannosamine-6-phosphate 2-epimerase">
    <location>
        <begin position="1"/>
        <end position="229"/>
    </location>
</feature>
<dbReference type="EC" id="5.1.3.9" evidence="1"/>
<dbReference type="EMBL" id="CP000468">
    <property type="protein sequence ID" value="ABJ02707.1"/>
    <property type="molecule type" value="Genomic_DNA"/>
</dbReference>
<dbReference type="RefSeq" id="WP_000054239.1">
    <property type="nucleotide sequence ID" value="NZ_CADILS010000003.1"/>
</dbReference>
<dbReference type="SMR" id="A1AGB7"/>
<dbReference type="KEGG" id="ecv:APECO1_3220"/>
<dbReference type="HOGENOM" id="CLU_086300_0_0_6"/>
<dbReference type="UniPathway" id="UPA00629">
    <property type="reaction ID" value="UER00682"/>
</dbReference>
<dbReference type="Proteomes" id="UP000008216">
    <property type="component" value="Chromosome"/>
</dbReference>
<dbReference type="GO" id="GO:0005829">
    <property type="term" value="C:cytosol"/>
    <property type="evidence" value="ECO:0007669"/>
    <property type="project" value="TreeGrafter"/>
</dbReference>
<dbReference type="GO" id="GO:0047465">
    <property type="term" value="F:N-acylglucosamine-6-phosphate 2-epimerase activity"/>
    <property type="evidence" value="ECO:0007669"/>
    <property type="project" value="UniProtKB-EC"/>
</dbReference>
<dbReference type="GO" id="GO:0005975">
    <property type="term" value="P:carbohydrate metabolic process"/>
    <property type="evidence" value="ECO:0007669"/>
    <property type="project" value="UniProtKB-UniRule"/>
</dbReference>
<dbReference type="GO" id="GO:0006053">
    <property type="term" value="P:N-acetylmannosamine catabolic process"/>
    <property type="evidence" value="ECO:0007669"/>
    <property type="project" value="TreeGrafter"/>
</dbReference>
<dbReference type="GO" id="GO:0019262">
    <property type="term" value="P:N-acetylneuraminate catabolic process"/>
    <property type="evidence" value="ECO:0007669"/>
    <property type="project" value="UniProtKB-UniRule"/>
</dbReference>
<dbReference type="CDD" id="cd04729">
    <property type="entry name" value="NanE"/>
    <property type="match status" value="1"/>
</dbReference>
<dbReference type="FunFam" id="3.20.20.70:FF:000035">
    <property type="entry name" value="Putative N-acetylmannosamine-6-phosphate 2-epimerase"/>
    <property type="match status" value="1"/>
</dbReference>
<dbReference type="Gene3D" id="3.20.20.70">
    <property type="entry name" value="Aldolase class I"/>
    <property type="match status" value="1"/>
</dbReference>
<dbReference type="HAMAP" id="MF_01235">
    <property type="entry name" value="ManNAc6P_epimer"/>
    <property type="match status" value="1"/>
</dbReference>
<dbReference type="InterPro" id="IPR013785">
    <property type="entry name" value="Aldolase_TIM"/>
</dbReference>
<dbReference type="InterPro" id="IPR007260">
    <property type="entry name" value="NanE"/>
</dbReference>
<dbReference type="InterPro" id="IPR011060">
    <property type="entry name" value="RibuloseP-bd_barrel"/>
</dbReference>
<dbReference type="NCBIfam" id="NF002231">
    <property type="entry name" value="PRK01130.1"/>
    <property type="match status" value="1"/>
</dbReference>
<dbReference type="PANTHER" id="PTHR36204">
    <property type="entry name" value="N-ACETYLMANNOSAMINE-6-PHOSPHATE 2-EPIMERASE-RELATED"/>
    <property type="match status" value="1"/>
</dbReference>
<dbReference type="PANTHER" id="PTHR36204:SF1">
    <property type="entry name" value="N-ACETYLMANNOSAMINE-6-PHOSPHATE 2-EPIMERASE-RELATED"/>
    <property type="match status" value="1"/>
</dbReference>
<dbReference type="Pfam" id="PF04131">
    <property type="entry name" value="NanE"/>
    <property type="match status" value="1"/>
</dbReference>
<dbReference type="SUPFAM" id="SSF51366">
    <property type="entry name" value="Ribulose-phoshate binding barrel"/>
    <property type="match status" value="1"/>
</dbReference>
<organism>
    <name type="scientific">Escherichia coli O1:K1 / APEC</name>
    <dbReference type="NCBI Taxonomy" id="405955"/>
    <lineage>
        <taxon>Bacteria</taxon>
        <taxon>Pseudomonadati</taxon>
        <taxon>Pseudomonadota</taxon>
        <taxon>Gammaproteobacteria</taxon>
        <taxon>Enterobacterales</taxon>
        <taxon>Enterobacteriaceae</taxon>
        <taxon>Escherichia</taxon>
    </lineage>
</organism>
<sequence length="229" mass="24074">MSLLAQLDQKIAANGGLIVSCQPVPDSPLDKPEIVAAMALAAEQAGAVAIRIEGVANLQATRAVVSVPIIGIVKRDLEDSPVRITAYIEDVDALAQAGADIIAIDGTDRPRPVPVETLLARIHHHGLLAMTDCSTPEDGLACQKLGAEIIGTTLSGYTTPETPEEPDLALVKTLSDAGCRVIAEGRYNTPAQAADAMRHGAWAVTVGSAITRLEHICQWYNTAMKKAVL</sequence>
<proteinExistence type="inferred from homology"/>
<protein>
    <recommendedName>
        <fullName evidence="1">Putative N-acetylmannosamine-6-phosphate 2-epimerase</fullName>
        <ecNumber evidence="1">5.1.3.9</ecNumber>
    </recommendedName>
    <alternativeName>
        <fullName evidence="1">ManNAc-6-P epimerase</fullName>
    </alternativeName>
</protein>
<accession>A1AGB7</accession>